<gene>
    <name evidence="1" type="primary">uxuA</name>
    <name type="ordered locus">Cphy_1061</name>
</gene>
<reference key="1">
    <citation type="submission" date="2007-11" db="EMBL/GenBank/DDBJ databases">
        <title>Complete genome sequence of Clostridium phytofermentans ISDg.</title>
        <authorList>
            <person name="Leschine S.B."/>
            <person name="Warnick T.A."/>
            <person name="Blanchard J.L."/>
            <person name="Schnell D.J."/>
            <person name="Petit E.L."/>
            <person name="LaTouf W.G."/>
            <person name="Copeland A."/>
            <person name="Lucas S."/>
            <person name="Lapidus A."/>
            <person name="Barry K."/>
            <person name="Glavina del Rio T."/>
            <person name="Dalin E."/>
            <person name="Tice H."/>
            <person name="Pitluck S."/>
            <person name="Kiss H."/>
            <person name="Brettin T."/>
            <person name="Bruce D."/>
            <person name="Detter J.C."/>
            <person name="Han C."/>
            <person name="Kuske C."/>
            <person name="Schmutz J."/>
            <person name="Larimer F."/>
            <person name="Land M."/>
            <person name="Hauser L."/>
            <person name="Kyrpides N."/>
            <person name="Kim E.A."/>
            <person name="Richardson P."/>
        </authorList>
    </citation>
    <scope>NUCLEOTIDE SEQUENCE [LARGE SCALE GENOMIC DNA]</scope>
    <source>
        <strain>ATCC 700394 / DSM 18823 / ISDg</strain>
    </source>
</reference>
<sequence>MKMTFRWYGEGNDSITLKQIKQIPGCSGLMGVIDQYAAGEVWEESVIAEYVEHVHKAGLEVEVIESVNVHEDIKLGLPSRELYIENYIKTIRNLAKHGIKVIVYNFMPVLDWLRTDLARVIEEDGSNSLYYDEEELLGLTPLQIVENTSKSSNGFTLPGWEPERLKELENVLALYKNIDPDKLRENYKYFLEKVIPVCEECGVKMAVHPDDPAWPIFGLPRIAHSEELFDKILELYDSESHTICLCTGSLGSNPENNIPEIIRHFGGKNRVGCFHVRNVKYLGYRKFRESSHLSSDGSLDMFEIMKAIHETAPDTYIRPDHGRMIWDEVGRPGYGLYDRALGIAYLNGIWEALEKSSK</sequence>
<dbReference type="EC" id="4.2.1.8" evidence="1"/>
<dbReference type="EMBL" id="CP000885">
    <property type="protein sequence ID" value="ABX41441.1"/>
    <property type="molecule type" value="Genomic_DNA"/>
</dbReference>
<dbReference type="RefSeq" id="WP_012199087.1">
    <property type="nucleotide sequence ID" value="NC_010001.1"/>
</dbReference>
<dbReference type="SMR" id="A9KMJ6"/>
<dbReference type="STRING" id="357809.Cphy_1061"/>
<dbReference type="KEGG" id="cpy:Cphy_1061"/>
<dbReference type="eggNOG" id="COG1312">
    <property type="taxonomic scope" value="Bacteria"/>
</dbReference>
<dbReference type="HOGENOM" id="CLU_058621_1_0_9"/>
<dbReference type="OrthoDB" id="9780250at2"/>
<dbReference type="UniPathway" id="UPA00246"/>
<dbReference type="Proteomes" id="UP000000370">
    <property type="component" value="Chromosome"/>
</dbReference>
<dbReference type="GO" id="GO:0008198">
    <property type="term" value="F:ferrous iron binding"/>
    <property type="evidence" value="ECO:0007669"/>
    <property type="project" value="TreeGrafter"/>
</dbReference>
<dbReference type="GO" id="GO:0030145">
    <property type="term" value="F:manganese ion binding"/>
    <property type="evidence" value="ECO:0007669"/>
    <property type="project" value="TreeGrafter"/>
</dbReference>
<dbReference type="GO" id="GO:0008927">
    <property type="term" value="F:mannonate dehydratase activity"/>
    <property type="evidence" value="ECO:0007669"/>
    <property type="project" value="UniProtKB-UniRule"/>
</dbReference>
<dbReference type="GO" id="GO:0042840">
    <property type="term" value="P:D-glucuronate catabolic process"/>
    <property type="evidence" value="ECO:0007669"/>
    <property type="project" value="TreeGrafter"/>
</dbReference>
<dbReference type="Gene3D" id="3.20.20.150">
    <property type="entry name" value="Divalent-metal-dependent TIM barrel enzymes"/>
    <property type="match status" value="1"/>
</dbReference>
<dbReference type="HAMAP" id="MF_00106">
    <property type="entry name" value="UxuA"/>
    <property type="match status" value="1"/>
</dbReference>
<dbReference type="InterPro" id="IPR004628">
    <property type="entry name" value="Man_deHydtase"/>
</dbReference>
<dbReference type="InterPro" id="IPR036237">
    <property type="entry name" value="Xyl_isomerase-like_sf"/>
</dbReference>
<dbReference type="NCBIfam" id="NF003027">
    <property type="entry name" value="PRK03906.1"/>
    <property type="match status" value="1"/>
</dbReference>
<dbReference type="NCBIfam" id="TIGR00695">
    <property type="entry name" value="uxuA"/>
    <property type="match status" value="1"/>
</dbReference>
<dbReference type="PANTHER" id="PTHR30387">
    <property type="entry name" value="MANNONATE DEHYDRATASE"/>
    <property type="match status" value="1"/>
</dbReference>
<dbReference type="PANTHER" id="PTHR30387:SF2">
    <property type="entry name" value="MANNONATE DEHYDRATASE"/>
    <property type="match status" value="1"/>
</dbReference>
<dbReference type="Pfam" id="PF03786">
    <property type="entry name" value="UxuA"/>
    <property type="match status" value="1"/>
</dbReference>
<dbReference type="PIRSF" id="PIRSF016049">
    <property type="entry name" value="Man_dehyd"/>
    <property type="match status" value="1"/>
</dbReference>
<dbReference type="SUPFAM" id="SSF51658">
    <property type="entry name" value="Xylose isomerase-like"/>
    <property type="match status" value="1"/>
</dbReference>
<proteinExistence type="inferred from homology"/>
<name>UXUA_LACP7</name>
<feature type="chain" id="PRO_1000075898" description="Mannonate dehydratase">
    <location>
        <begin position="1"/>
        <end position="358"/>
    </location>
</feature>
<organism>
    <name type="scientific">Lachnoclostridium phytofermentans (strain ATCC 700394 / DSM 18823 / ISDg)</name>
    <name type="common">Clostridium phytofermentans</name>
    <dbReference type="NCBI Taxonomy" id="357809"/>
    <lineage>
        <taxon>Bacteria</taxon>
        <taxon>Bacillati</taxon>
        <taxon>Bacillota</taxon>
        <taxon>Clostridia</taxon>
        <taxon>Lachnospirales</taxon>
        <taxon>Lachnospiraceae</taxon>
    </lineage>
</organism>
<accession>A9KMJ6</accession>
<keyword id="KW-0408">Iron</keyword>
<keyword id="KW-0456">Lyase</keyword>
<keyword id="KW-0464">Manganese</keyword>
<keyword id="KW-1185">Reference proteome</keyword>
<evidence type="ECO:0000255" key="1">
    <source>
        <dbReference type="HAMAP-Rule" id="MF_00106"/>
    </source>
</evidence>
<comment type="function">
    <text evidence="1">Catalyzes the dehydration of D-mannonate.</text>
</comment>
<comment type="catalytic activity">
    <reaction evidence="1">
        <text>D-mannonate = 2-dehydro-3-deoxy-D-gluconate + H2O</text>
        <dbReference type="Rhea" id="RHEA:20097"/>
        <dbReference type="ChEBI" id="CHEBI:15377"/>
        <dbReference type="ChEBI" id="CHEBI:17767"/>
        <dbReference type="ChEBI" id="CHEBI:57990"/>
        <dbReference type="EC" id="4.2.1.8"/>
    </reaction>
</comment>
<comment type="cofactor">
    <cofactor evidence="1">
        <name>Fe(2+)</name>
        <dbReference type="ChEBI" id="CHEBI:29033"/>
    </cofactor>
    <cofactor evidence="1">
        <name>Mn(2+)</name>
        <dbReference type="ChEBI" id="CHEBI:29035"/>
    </cofactor>
</comment>
<comment type="pathway">
    <text evidence="1">Carbohydrate metabolism; pentose and glucuronate interconversion.</text>
</comment>
<comment type="similarity">
    <text evidence="1">Belongs to the mannonate dehydratase family.</text>
</comment>
<protein>
    <recommendedName>
        <fullName evidence="1">Mannonate dehydratase</fullName>
        <ecNumber evidence="1">4.2.1.8</ecNumber>
    </recommendedName>
    <alternativeName>
        <fullName evidence="1">D-mannonate hydro-lyase</fullName>
    </alternativeName>
</protein>